<reference evidence="4 5" key="1">
    <citation type="journal article" date="2008" name="Rapid Commun. Mass Spectrom.">
        <title>The fallaxidin peptides from the skin secretion of the eastern dwarf tree frog Litoria fallax. Sequence determination by positive and negative ion electrospray mass spectrometry: antimicrobial activity and cDNA cloning of the fallaxidins.</title>
        <authorList>
            <person name="Jackway R.J."/>
            <person name="Bowie J.H."/>
            <person name="Bilusich D."/>
            <person name="Musgrave I.F."/>
            <person name="Surinya-Johnson K.H."/>
            <person name="Tyler M.J."/>
            <person name="Eichinger P.C.H."/>
        </authorList>
    </citation>
    <scope>NUCLEOTIDE SEQUENCE [MRNA]</scope>
    <scope>PROTEIN SEQUENCE OF 74-77; 86-89 AND 98-101</scope>
    <scope>FUNCTION</scope>
    <scope>SUBCELLULAR LOCATION</scope>
    <scope>TISSUE SPECIFICITY</scope>
    <scope>MASS SPECTROMETRY</scope>
    <scope>AMIDATION AT LEU-65; PHE-77; PHE-89 AND ILE-101</scope>
    <source>
        <tissue evidence="5">Skin</tissue>
        <tissue evidence="3">Skin secretion</tissue>
    </source>
</reference>
<evidence type="ECO:0000255" key="1"/>
<evidence type="ECO:0000256" key="2">
    <source>
        <dbReference type="SAM" id="MobiDB-lite"/>
    </source>
</evidence>
<evidence type="ECO:0000269" key="3">
    <source>
    </source>
</evidence>
<evidence type="ECO:0000305" key="4"/>
<evidence type="ECO:0000312" key="5">
    <source>
        <dbReference type="EMBL" id="ACH53451.1"/>
    </source>
</evidence>
<accession>B5LUQ8</accession>
<proteinExistence type="evidence at protein level"/>
<name>FALX6_LITFA</name>
<dbReference type="EMBL" id="EU912533">
    <property type="protein sequence ID" value="ACH53451.1"/>
    <property type="molecule type" value="mRNA"/>
</dbReference>
<dbReference type="TCDB" id="1.C.52.1.11">
    <property type="family name" value="the dermaseptin (dermaseptin) family"/>
</dbReference>
<dbReference type="GO" id="GO:0005576">
    <property type="term" value="C:extracellular region"/>
    <property type="evidence" value="ECO:0000314"/>
    <property type="project" value="UniProtKB"/>
</dbReference>
<dbReference type="GO" id="GO:0042742">
    <property type="term" value="P:defense response to bacterium"/>
    <property type="evidence" value="ECO:0007669"/>
    <property type="project" value="UniProtKB-KW"/>
</dbReference>
<dbReference type="InterPro" id="IPR004275">
    <property type="entry name" value="Frog_antimicrobial_propeptide"/>
</dbReference>
<dbReference type="Pfam" id="PF03032">
    <property type="entry name" value="FSAP_sig_propep"/>
    <property type="match status" value="1"/>
</dbReference>
<organism>
    <name type="scientific">Litoria fallax</name>
    <name type="common">Eastern dwarf tree frog</name>
    <name type="synonym">Hylomantis fallax</name>
    <dbReference type="NCBI Taxonomy" id="115422"/>
    <lineage>
        <taxon>Eukaryota</taxon>
        <taxon>Metazoa</taxon>
        <taxon>Chordata</taxon>
        <taxon>Craniata</taxon>
        <taxon>Vertebrata</taxon>
        <taxon>Euteleostomi</taxon>
        <taxon>Amphibia</taxon>
        <taxon>Batrachia</taxon>
        <taxon>Anura</taxon>
        <taxon>Neobatrachia</taxon>
        <taxon>Hyloidea</taxon>
        <taxon>Hylidae</taxon>
        <taxon>Pelodryadinae</taxon>
        <taxon>Litoria</taxon>
    </lineage>
</organism>
<protein>
    <recommendedName>
        <fullName evidence="5">Preprofallaxidin-6</fullName>
    </recommendedName>
    <component>
        <recommendedName>
            <fullName>Fallaxidin-1.3</fullName>
        </recommendedName>
    </component>
    <component>
        <recommendedName>
            <fullName>Fallaxidin-1.4</fullName>
        </recommendedName>
    </component>
    <component>
        <recommendedName>
            <fullName>Fallaxidin-3.1</fullName>
        </recommendedName>
    </component>
</protein>
<feature type="signal peptide" evidence="1 5">
    <location>
        <begin position="1"/>
        <end position="22"/>
    </location>
</feature>
<feature type="propeptide" id="PRO_0000361722" evidence="3">
    <location>
        <begin position="23"/>
        <end position="49"/>
    </location>
</feature>
<feature type="peptide" id="PRO_0000361723" description="Fallaxidin-3.1">
    <location>
        <begin position="50"/>
        <end position="65"/>
    </location>
</feature>
<feature type="propeptide" id="PRO_0000361724" evidence="3">
    <location>
        <begin position="69"/>
        <end position="73"/>
    </location>
</feature>
<feature type="peptide" id="PRO_0000361725" description="Fallaxidin-1.3">
    <location>
        <begin position="74"/>
        <end position="77"/>
    </location>
</feature>
<feature type="propeptide" id="PRO_0000361726" evidence="3">
    <location>
        <begin position="81"/>
        <end position="85"/>
    </location>
</feature>
<feature type="peptide" id="PRO_0000361727" description="Fallaxidin-1.3">
    <location>
        <begin position="86"/>
        <end position="89"/>
    </location>
</feature>
<feature type="propeptide" id="PRO_0000361728" evidence="3">
    <location>
        <begin position="93"/>
        <end position="97"/>
    </location>
</feature>
<feature type="peptide" id="PRO_0000361729" description="Fallaxidin-1.4">
    <location>
        <begin position="98"/>
        <end position="101"/>
    </location>
</feature>
<feature type="region of interest" description="Disordered" evidence="2">
    <location>
        <begin position="24"/>
        <end position="50"/>
    </location>
</feature>
<feature type="region of interest" description="Disordered" evidence="2">
    <location>
        <begin position="67"/>
        <end position="103"/>
    </location>
</feature>
<feature type="compositionally biased region" description="Acidic residues" evidence="2">
    <location>
        <begin position="31"/>
        <end position="41"/>
    </location>
</feature>
<feature type="modified residue" description="Leucine amide" evidence="3">
    <location>
        <position position="65"/>
    </location>
</feature>
<feature type="modified residue" description="Phenylalanine amide" evidence="3">
    <location>
        <position position="77"/>
    </location>
</feature>
<feature type="modified residue" description="Phenylalanine amide" evidence="3">
    <location>
        <position position="89"/>
    </location>
</feature>
<feature type="modified residue" description="Isoleucine amide" evidence="3">
    <location>
        <position position="101"/>
    </location>
</feature>
<keyword id="KW-0027">Amidation</keyword>
<keyword id="KW-0878">Amphibian defense peptide</keyword>
<keyword id="KW-0044">Antibiotic</keyword>
<keyword id="KW-0929">Antimicrobial</keyword>
<keyword id="KW-0903">Direct protein sequencing</keyword>
<keyword id="KW-0964">Secreted</keyword>
<keyword id="KW-0732">Signal</keyword>
<sequence length="103" mass="11991">MASLKKSLFLVLFLGFVSLSICEEEKRENEGNENEEEDENHEEGSEEKRGLLDLAKHVIGIASKLGKRSEEKRYHPFGKRSEEKRYHPFGKRSEEKRYPPIGK</sequence>
<comment type="function">
    <text evidence="3">Fallaxidin-1.3 shows no antibacterial activity against Gram-positive or Gram-negative bacteria. Does not inhibit the formation of NO by neuronal nitric oxide synthase. Has no effect on splenocyte proliferation or smooth muscle contraction.</text>
</comment>
<comment type="function">
    <text evidence="3">Fallaxidin-1.4 shows no antibacterial activity against Gram-positive or Gram-negative bacteria. Does not inhibit the formation of NO by neuronal nitric oxide synthase. Has no effect on splenocyte proliferation or smooth muscle contraction.</text>
</comment>
<comment type="function">
    <text evidence="3">Fallaxidin-3.1 shows antibacterial activity against the Gram-positive bacteria E.faecalis (MIC=100 uM) and L.lactis (MIC=100 uM). No antibacterial activity against the Gram-positive bacteria B.cereus, L.innocua, M.luteus, S.epidermidis, S.uberis and S.aureus, or the Gram-negative bacteria E.cloacae and E.coli.</text>
</comment>
<comment type="subcellular location">
    <subcellularLocation>
        <location evidence="3">Secreted</location>
    </subcellularLocation>
</comment>
<comment type="tissue specificity">
    <text evidence="3">Expressed by the skin glands.</text>
</comment>
<comment type="mass spectrometry" mass="562.0" method="Electrospray" evidence="3">
    <molecule>Fallaxidin-1.3</molecule>
    <text>The measured mass is that of Fallaxidin-1.3.</text>
</comment>
<comment type="mass spectrometry" mass="1646.0" method="Electrospray" evidence="3">
    <molecule>Fallaxidin-3.1</molecule>
    <text>The measured mass is that of Fallaxidin-3.1.</text>
</comment>
<comment type="similarity">
    <text evidence="1">Belongs to the frog skin active peptide (FSAP) family. Brevinin subfamily.</text>
</comment>